<protein>
    <recommendedName>
        <fullName evidence="1">ATP synthase subunit b, chloroplastic</fullName>
    </recommendedName>
    <alternativeName>
        <fullName evidence="1">ATP synthase F(0) sector subunit b</fullName>
    </alternativeName>
    <alternativeName>
        <fullName evidence="1">ATPase subunit I</fullName>
    </alternativeName>
</protein>
<feature type="chain" id="PRO_0000368980" description="ATP synthase subunit b, chloroplastic">
    <location>
        <begin position="1"/>
        <end position="183"/>
    </location>
</feature>
<feature type="transmembrane region" description="Helical" evidence="1">
    <location>
        <begin position="25"/>
        <end position="45"/>
    </location>
</feature>
<keyword id="KW-0066">ATP synthesis</keyword>
<keyword id="KW-0138">CF(0)</keyword>
<keyword id="KW-0150">Chloroplast</keyword>
<keyword id="KW-0375">Hydrogen ion transport</keyword>
<keyword id="KW-0406">Ion transport</keyword>
<keyword id="KW-0472">Membrane</keyword>
<keyword id="KW-0934">Plastid</keyword>
<keyword id="KW-1185">Reference proteome</keyword>
<keyword id="KW-0793">Thylakoid</keyword>
<keyword id="KW-0812">Transmembrane</keyword>
<keyword id="KW-1133">Transmembrane helix</keyword>
<keyword id="KW-0813">Transport</keyword>
<proteinExistence type="inferred from homology"/>
<dbReference type="EMBL" id="EF115542">
    <property type="protein sequence ID" value="ABK79492.1"/>
    <property type="molecule type" value="Genomic_DNA"/>
</dbReference>
<dbReference type="RefSeq" id="YP_899403.1">
    <property type="nucleotide sequence ID" value="NC_008602.1"/>
</dbReference>
<dbReference type="SMR" id="A1E9S0"/>
<dbReference type="FunCoup" id="A1E9S0">
    <property type="interactions" value="307"/>
</dbReference>
<dbReference type="STRING" id="4558.A1E9S0"/>
<dbReference type="GeneID" id="4549114"/>
<dbReference type="KEGG" id="sbi:4549114"/>
<dbReference type="InParanoid" id="A1E9S0"/>
<dbReference type="OrthoDB" id="1924782at2759"/>
<dbReference type="Proteomes" id="UP000000768">
    <property type="component" value="Chloroplast"/>
</dbReference>
<dbReference type="GO" id="GO:0009535">
    <property type="term" value="C:chloroplast thylakoid membrane"/>
    <property type="evidence" value="ECO:0007669"/>
    <property type="project" value="UniProtKB-SubCell"/>
</dbReference>
<dbReference type="GO" id="GO:0045259">
    <property type="term" value="C:proton-transporting ATP synthase complex"/>
    <property type="evidence" value="ECO:0007669"/>
    <property type="project" value="UniProtKB-KW"/>
</dbReference>
<dbReference type="GO" id="GO:0046933">
    <property type="term" value="F:proton-transporting ATP synthase activity, rotational mechanism"/>
    <property type="evidence" value="ECO:0007669"/>
    <property type="project" value="UniProtKB-UniRule"/>
</dbReference>
<dbReference type="CDD" id="cd06503">
    <property type="entry name" value="ATP-synt_Fo_b"/>
    <property type="match status" value="1"/>
</dbReference>
<dbReference type="HAMAP" id="MF_01398">
    <property type="entry name" value="ATP_synth_b_bprime"/>
    <property type="match status" value="1"/>
</dbReference>
<dbReference type="InterPro" id="IPR002146">
    <property type="entry name" value="ATP_synth_b/b'su_bac/chlpt"/>
</dbReference>
<dbReference type="PANTHER" id="PTHR34264">
    <property type="entry name" value="ATP SYNTHASE SUBUNIT B, CHLOROPLASTIC"/>
    <property type="match status" value="1"/>
</dbReference>
<dbReference type="PANTHER" id="PTHR34264:SF8">
    <property type="entry name" value="ATP SYNTHASE SUBUNIT B, CHLOROPLASTIC"/>
    <property type="match status" value="1"/>
</dbReference>
<dbReference type="Pfam" id="PF00430">
    <property type="entry name" value="ATP-synt_B"/>
    <property type="match status" value="1"/>
</dbReference>
<reference key="1">
    <citation type="journal article" date="2007" name="Theor. Appl. Genet.">
        <title>Complete chloroplast genome sequences of Hordeum vulgare, Sorghum bicolor and Agrostis stolonifera, and comparative analyses with other grass genomes.</title>
        <authorList>
            <person name="Saski C."/>
            <person name="Lee S.-B."/>
            <person name="Fjellheim S."/>
            <person name="Guda C."/>
            <person name="Jansen R.K."/>
            <person name="Luo H."/>
            <person name="Tomkins J."/>
            <person name="Rognli O.A."/>
            <person name="Daniell H."/>
            <person name="Clarke J.L."/>
        </authorList>
    </citation>
    <scope>NUCLEOTIDE SEQUENCE [LARGE SCALE GENOMIC DNA]</scope>
    <source>
        <strain>cv. BTx623</strain>
    </source>
</reference>
<organism>
    <name type="scientific">Sorghum bicolor</name>
    <name type="common">Sorghum</name>
    <name type="synonym">Sorghum vulgare</name>
    <dbReference type="NCBI Taxonomy" id="4558"/>
    <lineage>
        <taxon>Eukaryota</taxon>
        <taxon>Viridiplantae</taxon>
        <taxon>Streptophyta</taxon>
        <taxon>Embryophyta</taxon>
        <taxon>Tracheophyta</taxon>
        <taxon>Spermatophyta</taxon>
        <taxon>Magnoliopsida</taxon>
        <taxon>Liliopsida</taxon>
        <taxon>Poales</taxon>
        <taxon>Poaceae</taxon>
        <taxon>PACMAD clade</taxon>
        <taxon>Panicoideae</taxon>
        <taxon>Andropogonodae</taxon>
        <taxon>Andropogoneae</taxon>
        <taxon>Sorghinae</taxon>
        <taxon>Sorghum</taxon>
    </lineage>
</organism>
<name>ATPF_SORBI</name>
<accession>A1E9S0</accession>
<gene>
    <name evidence="1" type="primary">atpF</name>
</gene>
<geneLocation type="chloroplast"/>
<evidence type="ECO:0000255" key="1">
    <source>
        <dbReference type="HAMAP-Rule" id="MF_01398"/>
    </source>
</evidence>
<comment type="function">
    <text evidence="1">F(1)F(0) ATP synthase produces ATP from ADP in the presence of a proton or sodium gradient. F-type ATPases consist of two structural domains, F(1) containing the extramembraneous catalytic core and F(0) containing the membrane proton channel, linked together by a central stalk and a peripheral stalk. During catalysis, ATP synthesis in the catalytic domain of F(1) is coupled via a rotary mechanism of the central stalk subunits to proton translocation.</text>
</comment>
<comment type="function">
    <text evidence="1">Component of the F(0) channel, it forms part of the peripheral stalk, linking F(1) to F(0).</text>
</comment>
<comment type="subunit">
    <text evidence="1">F-type ATPases have 2 components, F(1) - the catalytic core - and F(0) - the membrane proton channel. F(1) has five subunits: alpha(3), beta(3), gamma(1), delta(1), epsilon(1). F(0) has four main subunits: a(1), b(1), b'(1) and c(10-14). The alpha and beta chains form an alternating ring which encloses part of the gamma chain. F(1) is attached to F(0) by a central stalk formed by the gamma and epsilon chains, while a peripheral stalk is formed by the delta, b and b' chains.</text>
</comment>
<comment type="subcellular location">
    <subcellularLocation>
        <location evidence="1">Plastid</location>
        <location evidence="1">Chloroplast thylakoid membrane</location>
        <topology evidence="1">Single-pass membrane protein</topology>
    </subcellularLocation>
</comment>
<comment type="miscellaneous">
    <text>In plastids the F-type ATPase is also known as CF(1)CF(0).</text>
</comment>
<comment type="similarity">
    <text evidence="1">Belongs to the ATPase B chain family.</text>
</comment>
<sequence length="183" mass="21079">MKNVTHSFVFLAHWPFAGSFGLNTDILATNLINLTVVVGVLIFFGKGVLKDLLDNRKQRILSTIRNSEELRRGTLEQLEKARIRLQKVELEADEYRMNGYSEIEREKENLINATSISLEQLEKSKNETLFYEKQRAMNQVRQRVFQQAVQGALGTLNSCLNTELHFRTIRANIGILGAIEWKR</sequence>